<name>NSRR_KLEP7</name>
<keyword id="KW-0001">2Fe-2S</keyword>
<keyword id="KW-0238">DNA-binding</keyword>
<keyword id="KW-0408">Iron</keyword>
<keyword id="KW-0411">Iron-sulfur</keyword>
<keyword id="KW-0479">Metal-binding</keyword>
<keyword id="KW-0678">Repressor</keyword>
<keyword id="KW-0804">Transcription</keyword>
<keyword id="KW-0805">Transcription regulation</keyword>
<organism>
    <name type="scientific">Klebsiella pneumoniae subsp. pneumoniae (strain ATCC 700721 / MGH 78578)</name>
    <dbReference type="NCBI Taxonomy" id="272620"/>
    <lineage>
        <taxon>Bacteria</taxon>
        <taxon>Pseudomonadati</taxon>
        <taxon>Pseudomonadota</taxon>
        <taxon>Gammaproteobacteria</taxon>
        <taxon>Enterobacterales</taxon>
        <taxon>Enterobacteriaceae</taxon>
        <taxon>Klebsiella/Raoultella group</taxon>
        <taxon>Klebsiella</taxon>
        <taxon>Klebsiella pneumoniae complex</taxon>
    </lineage>
</organism>
<accession>A6TH94</accession>
<comment type="function">
    <text evidence="1">Nitric oxide-sensitive repressor of genes involved in protecting the cell against nitrosative stress. May require iron for activity.</text>
</comment>
<comment type="cofactor">
    <cofactor evidence="1">
        <name>[2Fe-2S] cluster</name>
        <dbReference type="ChEBI" id="CHEBI:190135"/>
    </cofactor>
    <text evidence="1">Binds 1 [2Fe-2S] cluster per subunit.</text>
</comment>
<sequence>MQLTSFTDYGLRALIYMASLPEGRMTSISEVTEVYGVSRNHMVKIINQLSRMGYVTAVRGKNGGIRLGKPAGQIRVGDVVRDLEPLSLVNCSSEFCHITPACRLKQALAEAAQSFLKELDNYTLADLVEKNQPLYKLLLVE</sequence>
<reference key="1">
    <citation type="submission" date="2006-09" db="EMBL/GenBank/DDBJ databases">
        <authorList>
            <consortium name="The Klebsiella pneumonia Genome Sequencing Project"/>
            <person name="McClelland M."/>
            <person name="Sanderson E.K."/>
            <person name="Spieth J."/>
            <person name="Clifton W.S."/>
            <person name="Latreille P."/>
            <person name="Sabo A."/>
            <person name="Pepin K."/>
            <person name="Bhonagiri V."/>
            <person name="Porwollik S."/>
            <person name="Ali J."/>
            <person name="Wilson R.K."/>
        </authorList>
    </citation>
    <scope>NUCLEOTIDE SEQUENCE [LARGE SCALE GENOMIC DNA]</scope>
    <source>
        <strain>ATCC 700721 / MGH 78578</strain>
    </source>
</reference>
<protein>
    <recommendedName>
        <fullName evidence="1">HTH-type transcriptional repressor NsrR</fullName>
    </recommendedName>
</protein>
<evidence type="ECO:0000255" key="1">
    <source>
        <dbReference type="HAMAP-Rule" id="MF_01177"/>
    </source>
</evidence>
<gene>
    <name evidence="1" type="primary">nsrR</name>
    <name type="ordered locus">KPN78578_45040</name>
    <name type="ORF">KPN_04577</name>
</gene>
<proteinExistence type="inferred from homology"/>
<dbReference type="EMBL" id="CP000647">
    <property type="protein sequence ID" value="ABR79928.1"/>
    <property type="molecule type" value="Genomic_DNA"/>
</dbReference>
<dbReference type="RefSeq" id="WP_002885667.1">
    <property type="nucleotide sequence ID" value="NC_009648.1"/>
</dbReference>
<dbReference type="SMR" id="A6TH94"/>
<dbReference type="STRING" id="272620.KPN_04577"/>
<dbReference type="PaxDb" id="272620-KPN_04577"/>
<dbReference type="DNASU" id="5341201"/>
<dbReference type="EnsemblBacteria" id="ABR79928">
    <property type="protein sequence ID" value="ABR79928"/>
    <property type="gene ID" value="KPN_04577"/>
</dbReference>
<dbReference type="GeneID" id="93275417"/>
<dbReference type="KEGG" id="kpn:KPN_04577"/>
<dbReference type="HOGENOM" id="CLU_107144_2_1_6"/>
<dbReference type="Proteomes" id="UP000000265">
    <property type="component" value="Chromosome"/>
</dbReference>
<dbReference type="GO" id="GO:0005829">
    <property type="term" value="C:cytosol"/>
    <property type="evidence" value="ECO:0007669"/>
    <property type="project" value="TreeGrafter"/>
</dbReference>
<dbReference type="GO" id="GO:0051537">
    <property type="term" value="F:2 iron, 2 sulfur cluster binding"/>
    <property type="evidence" value="ECO:0007669"/>
    <property type="project" value="UniProtKB-KW"/>
</dbReference>
<dbReference type="GO" id="GO:0003700">
    <property type="term" value="F:DNA-binding transcription factor activity"/>
    <property type="evidence" value="ECO:0007669"/>
    <property type="project" value="UniProtKB-UniRule"/>
</dbReference>
<dbReference type="GO" id="GO:0003690">
    <property type="term" value="F:double-stranded DNA binding"/>
    <property type="evidence" value="ECO:0007669"/>
    <property type="project" value="UniProtKB-UniRule"/>
</dbReference>
<dbReference type="GO" id="GO:0005506">
    <property type="term" value="F:iron ion binding"/>
    <property type="evidence" value="ECO:0007669"/>
    <property type="project" value="UniProtKB-UniRule"/>
</dbReference>
<dbReference type="GO" id="GO:0045892">
    <property type="term" value="P:negative regulation of DNA-templated transcription"/>
    <property type="evidence" value="ECO:0007669"/>
    <property type="project" value="InterPro"/>
</dbReference>
<dbReference type="FunFam" id="1.10.10.10:FF:000105">
    <property type="entry name" value="HTH-type transcriptional repressor NsrR"/>
    <property type="match status" value="1"/>
</dbReference>
<dbReference type="Gene3D" id="1.10.10.10">
    <property type="entry name" value="Winged helix-like DNA-binding domain superfamily/Winged helix DNA-binding domain"/>
    <property type="match status" value="1"/>
</dbReference>
<dbReference type="HAMAP" id="MF_01177">
    <property type="entry name" value="HTH_type_NsrR"/>
    <property type="match status" value="1"/>
</dbReference>
<dbReference type="InterPro" id="IPR030489">
    <property type="entry name" value="TR_Rrf2-type_CS"/>
</dbReference>
<dbReference type="InterPro" id="IPR000944">
    <property type="entry name" value="Tscrpt_reg_Rrf2"/>
</dbReference>
<dbReference type="InterPro" id="IPR023761">
    <property type="entry name" value="Tscrpt_rep_HTH_NsrR"/>
</dbReference>
<dbReference type="InterPro" id="IPR036388">
    <property type="entry name" value="WH-like_DNA-bd_sf"/>
</dbReference>
<dbReference type="InterPro" id="IPR036390">
    <property type="entry name" value="WH_DNA-bd_sf"/>
</dbReference>
<dbReference type="NCBIfam" id="NF008240">
    <property type="entry name" value="PRK11014.1"/>
    <property type="match status" value="1"/>
</dbReference>
<dbReference type="NCBIfam" id="TIGR00738">
    <property type="entry name" value="rrf2_super"/>
    <property type="match status" value="1"/>
</dbReference>
<dbReference type="PANTHER" id="PTHR33221:SF4">
    <property type="entry name" value="HTH-TYPE TRANSCRIPTIONAL REPRESSOR NSRR"/>
    <property type="match status" value="1"/>
</dbReference>
<dbReference type="PANTHER" id="PTHR33221">
    <property type="entry name" value="WINGED HELIX-TURN-HELIX TRANSCRIPTIONAL REGULATOR, RRF2 FAMILY"/>
    <property type="match status" value="1"/>
</dbReference>
<dbReference type="Pfam" id="PF02082">
    <property type="entry name" value="Rrf2"/>
    <property type="match status" value="1"/>
</dbReference>
<dbReference type="SUPFAM" id="SSF46785">
    <property type="entry name" value="Winged helix' DNA-binding domain"/>
    <property type="match status" value="1"/>
</dbReference>
<dbReference type="PROSITE" id="PS01332">
    <property type="entry name" value="HTH_RRF2_1"/>
    <property type="match status" value="1"/>
</dbReference>
<dbReference type="PROSITE" id="PS51197">
    <property type="entry name" value="HTH_RRF2_2"/>
    <property type="match status" value="1"/>
</dbReference>
<feature type="chain" id="PRO_1000085435" description="HTH-type transcriptional repressor NsrR">
    <location>
        <begin position="1"/>
        <end position="141"/>
    </location>
</feature>
<feature type="domain" description="HTH rrf2-type" evidence="1">
    <location>
        <begin position="2"/>
        <end position="129"/>
    </location>
</feature>
<feature type="DNA-binding region" description="H-T-H motif" evidence="1">
    <location>
        <begin position="28"/>
        <end position="51"/>
    </location>
</feature>
<feature type="binding site" evidence="1">
    <location>
        <position position="91"/>
    </location>
    <ligand>
        <name>[2Fe-2S] cluster</name>
        <dbReference type="ChEBI" id="CHEBI:190135"/>
    </ligand>
</feature>
<feature type="binding site" evidence="1">
    <location>
        <position position="96"/>
    </location>
    <ligand>
        <name>[2Fe-2S] cluster</name>
        <dbReference type="ChEBI" id="CHEBI:190135"/>
    </ligand>
</feature>
<feature type="binding site" evidence="1">
    <location>
        <position position="102"/>
    </location>
    <ligand>
        <name>[2Fe-2S] cluster</name>
        <dbReference type="ChEBI" id="CHEBI:190135"/>
    </ligand>
</feature>